<feature type="chain" id="PRO_0000108382" description="Photosystem II extrinsic protein V">
    <location>
        <begin position="1"/>
        <end position="119" status="greater than"/>
    </location>
</feature>
<feature type="binding site" description="covalent" evidence="2">
    <location>
        <position position="36"/>
    </location>
    <ligand>
        <name>heme c</name>
        <dbReference type="ChEBI" id="CHEBI:61717"/>
    </ligand>
</feature>
<feature type="binding site" description="covalent" evidence="2">
    <location>
        <position position="39"/>
    </location>
    <ligand>
        <name>heme c</name>
        <dbReference type="ChEBI" id="CHEBI:61717"/>
    </ligand>
</feature>
<feature type="binding site" description="axial binding residue" evidence="2">
    <location>
        <position position="40"/>
    </location>
    <ligand>
        <name>heme c</name>
        <dbReference type="ChEBI" id="CHEBI:61717"/>
    </ligand>
    <ligandPart>
        <name>Fe</name>
        <dbReference type="ChEBI" id="CHEBI:18248"/>
    </ligandPart>
</feature>
<feature type="non-terminal residue">
    <location>
        <position position="119"/>
    </location>
</feature>
<organism>
    <name type="scientific">Aphanizomenon flos-aquae</name>
    <dbReference type="NCBI Taxonomy" id="1176"/>
    <lineage>
        <taxon>Bacteria</taxon>
        <taxon>Bacillati</taxon>
        <taxon>Cyanobacteriota</taxon>
        <taxon>Cyanophyceae</taxon>
        <taxon>Nostocales</taxon>
        <taxon>Aphanizomenonaceae</taxon>
        <taxon>Aphanizomenon</taxon>
    </lineage>
</organism>
<sequence length="119" mass="12888">LELDETIRTVPLNDKGGTVVLSLEQVKEGKLFNYACAQCHAGGVTKTNQNVGLEPEALAGALPNRMKNPTTYDGEEEISEIPSIKSANIFRNLTDEDLKAIAEHILLEPLVVGTKWGGK</sequence>
<keyword id="KW-0903">Direct protein sequencing</keyword>
<keyword id="KW-0249">Electron transport</keyword>
<keyword id="KW-0349">Heme</keyword>
<keyword id="KW-0408">Iron</keyword>
<keyword id="KW-0472">Membrane</keyword>
<keyword id="KW-0479">Metal-binding</keyword>
<keyword id="KW-0602">Photosynthesis</keyword>
<keyword id="KW-0604">Photosystem II</keyword>
<keyword id="KW-0793">Thylakoid</keyword>
<keyword id="KW-0813">Transport</keyword>
<reference key="1">
    <citation type="journal article" date="1989" name="Arch. Biochem. Biophys.">
        <title>The amino acid sequence of low-potential cytochrome c550 from the cyanobacterium Microcystis aeruginosa.</title>
        <authorList>
            <person name="Cohn C.L."/>
            <person name="Sprinkle J.R."/>
            <person name="Alam J."/>
            <person name="Hermodson M."/>
            <person name="Meyer T."/>
            <person name="Krogmann D.W."/>
        </authorList>
    </citation>
    <scope>PROTEIN SEQUENCE</scope>
</reference>
<proteinExistence type="evidence at protein level"/>
<comment type="function">
    <text evidence="1">One of the extrinsic, lumenal subunits of photosystem II (PSII). PSII is a light-driven water plastoquinone oxidoreductase, using light energy to abstract electrons from H(2)O, generating a proton gradient subsequently used for ATP formation. The extrinsic proteins stabilize the structure of photosystem II oxygen-evolving complex (OEC), the ion environment of oxygen evolution and protect the OEC against heat-induced inactivation. Low-potential cytochrome c that plays a role in the OEC of PSII.</text>
</comment>
<comment type="cofactor">
    <cofactor evidence="1">
        <name>heme c</name>
        <dbReference type="ChEBI" id="CHEBI:61717"/>
    </cofactor>
    <text evidence="1">Binds 1 heme c group covalently per subunit.</text>
</comment>
<comment type="subunit">
    <text evidence="1">PSII is composed of 1 copy each of membrane proteins PsbA, PsbB, PsbC, PsbD, PsbE, PsbF, PsbH, PsbI, PsbJ, PsbK, PsbL, PsbM, PsbT, PsbX, PsbY, PsbZ, Psb30/Ycf12, peripheral proteins PsbO, CyanoQ (PsbQ), PsbU, PsbV and a large number of cofactors. It forms dimeric complexes.</text>
</comment>
<comment type="subcellular location">
    <subcellularLocation>
        <location evidence="1">Cellular thylakoid membrane</location>
        <topology evidence="1">Peripheral membrane protein</topology>
        <orientation evidence="1">Lumenal side</orientation>
    </subcellularLocation>
    <text evidence="1">Associated with photosystem II at the lumenal side of the thylakoid membrane.</text>
</comment>
<comment type="similarity">
    <text evidence="4">Belongs to the cytochrome c family. PsbV subfamily.</text>
</comment>
<name>CY550_APHFL</name>
<dbReference type="PIR" id="S07476">
    <property type="entry name" value="S07476"/>
</dbReference>
<dbReference type="SMR" id="P56151"/>
<dbReference type="GO" id="GO:0009523">
    <property type="term" value="C:photosystem II"/>
    <property type="evidence" value="ECO:0007669"/>
    <property type="project" value="UniProtKB-KW"/>
</dbReference>
<dbReference type="GO" id="GO:0031676">
    <property type="term" value="C:plasma membrane-derived thylakoid membrane"/>
    <property type="evidence" value="ECO:0007669"/>
    <property type="project" value="UniProtKB-SubCell"/>
</dbReference>
<dbReference type="GO" id="GO:0009055">
    <property type="term" value="F:electron transfer activity"/>
    <property type="evidence" value="ECO:0007669"/>
    <property type="project" value="InterPro"/>
</dbReference>
<dbReference type="GO" id="GO:0020037">
    <property type="term" value="F:heme binding"/>
    <property type="evidence" value="ECO:0007669"/>
    <property type="project" value="InterPro"/>
</dbReference>
<dbReference type="GO" id="GO:0005506">
    <property type="term" value="F:iron ion binding"/>
    <property type="evidence" value="ECO:0007669"/>
    <property type="project" value="InterPro"/>
</dbReference>
<dbReference type="GO" id="GO:0015979">
    <property type="term" value="P:photosynthesis"/>
    <property type="evidence" value="ECO:0007669"/>
    <property type="project" value="UniProtKB-KW"/>
</dbReference>
<dbReference type="GO" id="GO:0022904">
    <property type="term" value="P:respiratory electron transport chain"/>
    <property type="evidence" value="ECO:0007669"/>
    <property type="project" value="InterPro"/>
</dbReference>
<dbReference type="Gene3D" id="1.10.760.10">
    <property type="entry name" value="Cytochrome c-like domain"/>
    <property type="match status" value="1"/>
</dbReference>
<dbReference type="InterPro" id="IPR009056">
    <property type="entry name" value="Cyt_c-like_dom"/>
</dbReference>
<dbReference type="InterPro" id="IPR036909">
    <property type="entry name" value="Cyt_c-like_dom_sf"/>
</dbReference>
<dbReference type="InterPro" id="IPR029490">
    <property type="entry name" value="Cytochrom_C550"/>
</dbReference>
<dbReference type="InterPro" id="IPR016003">
    <property type="entry name" value="PsbV_cyt_c550-like"/>
</dbReference>
<dbReference type="Pfam" id="PF14495">
    <property type="entry name" value="Cytochrom_C550"/>
    <property type="match status" value="1"/>
</dbReference>
<dbReference type="PIRSF" id="PIRSF005890">
    <property type="entry name" value="Phot_II_cyt_c550"/>
    <property type="match status" value="1"/>
</dbReference>
<dbReference type="SUPFAM" id="SSF46626">
    <property type="entry name" value="Cytochrome c"/>
    <property type="match status" value="1"/>
</dbReference>
<dbReference type="PROSITE" id="PS51007">
    <property type="entry name" value="CYTC"/>
    <property type="match status" value="1"/>
</dbReference>
<evidence type="ECO:0000250" key="1">
    <source>
        <dbReference type="UniProtKB" id="Q55013"/>
    </source>
</evidence>
<evidence type="ECO:0000255" key="2">
    <source>
        <dbReference type="PROSITE-ProRule" id="PRU00433"/>
    </source>
</evidence>
<evidence type="ECO:0000303" key="3">
    <source>
    </source>
</evidence>
<evidence type="ECO:0000305" key="4"/>
<gene>
    <name type="primary">psbV</name>
</gene>
<accession>P56151</accession>
<protein>
    <recommendedName>
        <fullName evidence="4">Photosystem II extrinsic protein V</fullName>
        <shortName evidence="4">PsbV</shortName>
    </recommendedName>
    <alternativeName>
        <fullName>Cytochrome c-550</fullName>
    </alternativeName>
    <alternativeName>
        <fullName evidence="3">Cytochrome c550</fullName>
    </alternativeName>
    <alternativeName>
        <fullName>Low-potential cytochrome c</fullName>
    </alternativeName>
</protein>